<reference key="1">
    <citation type="journal article" date="2007" name="Proc. Natl. Acad. Sci. U.S.A.">
        <title>Genome plasticity of BCG and impact on vaccine efficacy.</title>
        <authorList>
            <person name="Brosch R."/>
            <person name="Gordon S.V."/>
            <person name="Garnier T."/>
            <person name="Eiglmeier K."/>
            <person name="Frigui W."/>
            <person name="Valenti P."/>
            <person name="Dos Santos S."/>
            <person name="Duthoy S."/>
            <person name="Lacroix C."/>
            <person name="Garcia-Pelayo C."/>
            <person name="Inwald J.K."/>
            <person name="Golby P."/>
            <person name="Garcia J.N."/>
            <person name="Hewinson R.G."/>
            <person name="Behr M.A."/>
            <person name="Quail M.A."/>
            <person name="Churcher C."/>
            <person name="Barrell B.G."/>
            <person name="Parkhill J."/>
            <person name="Cole S.T."/>
        </authorList>
    </citation>
    <scope>NUCLEOTIDE SEQUENCE [LARGE SCALE GENOMIC DNA]</scope>
    <source>
        <strain>BCG / Pasteur 1173P2</strain>
    </source>
</reference>
<gene>
    <name evidence="1" type="primary">pyrB</name>
    <name type="ordered locus">BCG_1441</name>
</gene>
<name>PYRB_MYCBP</name>
<proteinExistence type="inferred from homology"/>
<feature type="chain" id="PRO_0000301590" description="Aspartate carbamoyltransferase catalytic subunit">
    <location>
        <begin position="1"/>
        <end position="319"/>
    </location>
</feature>
<feature type="binding site" evidence="1">
    <location>
        <position position="57"/>
    </location>
    <ligand>
        <name>carbamoyl phosphate</name>
        <dbReference type="ChEBI" id="CHEBI:58228"/>
    </ligand>
</feature>
<feature type="binding site" evidence="1">
    <location>
        <position position="58"/>
    </location>
    <ligand>
        <name>carbamoyl phosphate</name>
        <dbReference type="ChEBI" id="CHEBI:58228"/>
    </ligand>
</feature>
<feature type="binding site" evidence="1">
    <location>
        <position position="85"/>
    </location>
    <ligand>
        <name>L-aspartate</name>
        <dbReference type="ChEBI" id="CHEBI:29991"/>
    </ligand>
</feature>
<feature type="binding site" evidence="1">
    <location>
        <position position="107"/>
    </location>
    <ligand>
        <name>carbamoyl phosphate</name>
        <dbReference type="ChEBI" id="CHEBI:58228"/>
    </ligand>
</feature>
<feature type="binding site" evidence="1">
    <location>
        <position position="140"/>
    </location>
    <ligand>
        <name>carbamoyl phosphate</name>
        <dbReference type="ChEBI" id="CHEBI:58228"/>
    </ligand>
</feature>
<feature type="binding site" evidence="1">
    <location>
        <position position="143"/>
    </location>
    <ligand>
        <name>carbamoyl phosphate</name>
        <dbReference type="ChEBI" id="CHEBI:58228"/>
    </ligand>
</feature>
<feature type="binding site" evidence="1">
    <location>
        <position position="173"/>
    </location>
    <ligand>
        <name>L-aspartate</name>
        <dbReference type="ChEBI" id="CHEBI:29991"/>
    </ligand>
</feature>
<feature type="binding site" evidence="1">
    <location>
        <position position="227"/>
    </location>
    <ligand>
        <name>L-aspartate</name>
        <dbReference type="ChEBI" id="CHEBI:29991"/>
    </ligand>
</feature>
<feature type="binding site" evidence="1">
    <location>
        <position position="268"/>
    </location>
    <ligand>
        <name>carbamoyl phosphate</name>
        <dbReference type="ChEBI" id="CHEBI:58228"/>
    </ligand>
</feature>
<feature type="binding site" evidence="1">
    <location>
        <position position="269"/>
    </location>
    <ligand>
        <name>carbamoyl phosphate</name>
        <dbReference type="ChEBI" id="CHEBI:58228"/>
    </ligand>
</feature>
<keyword id="KW-0665">Pyrimidine biosynthesis</keyword>
<keyword id="KW-0808">Transferase</keyword>
<sequence length="319" mass="33819">MTPRHLLTAADLSRDDATAILDDADRFAQALVGRDIKKLPTLRGRTVVTMFYENSTRTRVSFEVAGKWMSADVINVSAAGSSVGKGESLRDTALTLRAAGADALIIRHPASGAAHLLAQWTGAHNDGPAVINAGDGTHEHPTQALLDALTIRQRLGGIEGRRIVIVGDILHSRVARSNVMLLDTLGAEVVLVAPPTLLPVGVTGWPATVSHDFDAELPAADAVLMLRVQAERMNGGFFPSVREYSVRYGLTERRQAMLPGHAVVLHPGPMVRGMEITSSVADSSQSAVLQQVSNGVQVRMAVLFHVLVGAQDAGKEGAA</sequence>
<dbReference type="EC" id="2.1.3.2" evidence="1"/>
<dbReference type="EMBL" id="AM408590">
    <property type="protein sequence ID" value="CAL71428.1"/>
    <property type="molecule type" value="Genomic_DNA"/>
</dbReference>
<dbReference type="RefSeq" id="WP_003407200.1">
    <property type="nucleotide sequence ID" value="NC_008769.1"/>
</dbReference>
<dbReference type="SMR" id="A1KIG9"/>
<dbReference type="KEGG" id="mbb:BCG_1441"/>
<dbReference type="HOGENOM" id="CLU_043846_2_0_11"/>
<dbReference type="UniPathway" id="UPA00070">
    <property type="reaction ID" value="UER00116"/>
</dbReference>
<dbReference type="Proteomes" id="UP000001472">
    <property type="component" value="Chromosome"/>
</dbReference>
<dbReference type="GO" id="GO:0005829">
    <property type="term" value="C:cytosol"/>
    <property type="evidence" value="ECO:0007669"/>
    <property type="project" value="TreeGrafter"/>
</dbReference>
<dbReference type="GO" id="GO:0016597">
    <property type="term" value="F:amino acid binding"/>
    <property type="evidence" value="ECO:0007669"/>
    <property type="project" value="InterPro"/>
</dbReference>
<dbReference type="GO" id="GO:0004070">
    <property type="term" value="F:aspartate carbamoyltransferase activity"/>
    <property type="evidence" value="ECO:0007669"/>
    <property type="project" value="UniProtKB-UniRule"/>
</dbReference>
<dbReference type="GO" id="GO:0006207">
    <property type="term" value="P:'de novo' pyrimidine nucleobase biosynthetic process"/>
    <property type="evidence" value="ECO:0007669"/>
    <property type="project" value="InterPro"/>
</dbReference>
<dbReference type="GO" id="GO:0044205">
    <property type="term" value="P:'de novo' UMP biosynthetic process"/>
    <property type="evidence" value="ECO:0007669"/>
    <property type="project" value="UniProtKB-UniRule"/>
</dbReference>
<dbReference type="GO" id="GO:0006520">
    <property type="term" value="P:amino acid metabolic process"/>
    <property type="evidence" value="ECO:0007669"/>
    <property type="project" value="InterPro"/>
</dbReference>
<dbReference type="FunFam" id="3.40.50.1370:FF:000007">
    <property type="entry name" value="Aspartate carbamoyltransferase"/>
    <property type="match status" value="1"/>
</dbReference>
<dbReference type="FunFam" id="3.40.50.1370:FF:000012">
    <property type="entry name" value="Aspartate carbamoyltransferase"/>
    <property type="match status" value="1"/>
</dbReference>
<dbReference type="Gene3D" id="3.40.50.1370">
    <property type="entry name" value="Aspartate/ornithine carbamoyltransferase"/>
    <property type="match status" value="2"/>
</dbReference>
<dbReference type="HAMAP" id="MF_00001">
    <property type="entry name" value="Asp_carb_tr"/>
    <property type="match status" value="1"/>
</dbReference>
<dbReference type="InterPro" id="IPR006132">
    <property type="entry name" value="Asp/Orn_carbamoyltranf_P-bd"/>
</dbReference>
<dbReference type="InterPro" id="IPR006130">
    <property type="entry name" value="Asp/Orn_carbamoylTrfase"/>
</dbReference>
<dbReference type="InterPro" id="IPR036901">
    <property type="entry name" value="Asp/Orn_carbamoylTrfase_sf"/>
</dbReference>
<dbReference type="InterPro" id="IPR002082">
    <property type="entry name" value="Asp_carbamoyltransf"/>
</dbReference>
<dbReference type="InterPro" id="IPR006131">
    <property type="entry name" value="Asp_carbamoyltransf_Asp/Orn-bd"/>
</dbReference>
<dbReference type="NCBIfam" id="TIGR00670">
    <property type="entry name" value="asp_carb_tr"/>
    <property type="match status" value="1"/>
</dbReference>
<dbReference type="NCBIfam" id="NF002032">
    <property type="entry name" value="PRK00856.1"/>
    <property type="match status" value="1"/>
</dbReference>
<dbReference type="PANTHER" id="PTHR45753:SF6">
    <property type="entry name" value="ASPARTATE CARBAMOYLTRANSFERASE"/>
    <property type="match status" value="1"/>
</dbReference>
<dbReference type="PANTHER" id="PTHR45753">
    <property type="entry name" value="ORNITHINE CARBAMOYLTRANSFERASE, MITOCHONDRIAL"/>
    <property type="match status" value="1"/>
</dbReference>
<dbReference type="Pfam" id="PF00185">
    <property type="entry name" value="OTCace"/>
    <property type="match status" value="1"/>
</dbReference>
<dbReference type="Pfam" id="PF02729">
    <property type="entry name" value="OTCace_N"/>
    <property type="match status" value="1"/>
</dbReference>
<dbReference type="PRINTS" id="PR00100">
    <property type="entry name" value="AOTCASE"/>
</dbReference>
<dbReference type="PRINTS" id="PR00101">
    <property type="entry name" value="ATCASE"/>
</dbReference>
<dbReference type="SUPFAM" id="SSF53671">
    <property type="entry name" value="Aspartate/ornithine carbamoyltransferase"/>
    <property type="match status" value="1"/>
</dbReference>
<dbReference type="PROSITE" id="PS00097">
    <property type="entry name" value="CARBAMOYLTRANSFERASE"/>
    <property type="match status" value="1"/>
</dbReference>
<comment type="function">
    <text evidence="1">Catalyzes the condensation of carbamoyl phosphate and aspartate to form carbamoyl aspartate and inorganic phosphate, the committed step in the de novo pyrimidine nucleotide biosynthesis pathway.</text>
</comment>
<comment type="catalytic activity">
    <reaction evidence="1">
        <text>carbamoyl phosphate + L-aspartate = N-carbamoyl-L-aspartate + phosphate + H(+)</text>
        <dbReference type="Rhea" id="RHEA:20013"/>
        <dbReference type="ChEBI" id="CHEBI:15378"/>
        <dbReference type="ChEBI" id="CHEBI:29991"/>
        <dbReference type="ChEBI" id="CHEBI:32814"/>
        <dbReference type="ChEBI" id="CHEBI:43474"/>
        <dbReference type="ChEBI" id="CHEBI:58228"/>
        <dbReference type="EC" id="2.1.3.2"/>
    </reaction>
</comment>
<comment type="pathway">
    <text evidence="1">Pyrimidine metabolism; UMP biosynthesis via de novo pathway; (S)-dihydroorotate from bicarbonate: step 2/3.</text>
</comment>
<comment type="subunit">
    <text evidence="1">Heterododecamer (2C3:3R2) of six catalytic PyrB chains organized as two trimers (C3), and six regulatory PyrI chains organized as three dimers (R2).</text>
</comment>
<comment type="similarity">
    <text evidence="1">Belongs to the aspartate/ornithine carbamoyltransferase superfamily. ATCase family.</text>
</comment>
<accession>A1KIG9</accession>
<evidence type="ECO:0000255" key="1">
    <source>
        <dbReference type="HAMAP-Rule" id="MF_00001"/>
    </source>
</evidence>
<protein>
    <recommendedName>
        <fullName evidence="1">Aspartate carbamoyltransferase catalytic subunit</fullName>
        <ecNumber evidence="1">2.1.3.2</ecNumber>
    </recommendedName>
    <alternativeName>
        <fullName evidence="1">Aspartate transcarbamylase</fullName>
        <shortName evidence="1">ATCase</shortName>
    </alternativeName>
</protein>
<organism>
    <name type="scientific">Mycobacterium bovis (strain BCG / Pasteur 1173P2)</name>
    <dbReference type="NCBI Taxonomy" id="410289"/>
    <lineage>
        <taxon>Bacteria</taxon>
        <taxon>Bacillati</taxon>
        <taxon>Actinomycetota</taxon>
        <taxon>Actinomycetes</taxon>
        <taxon>Mycobacteriales</taxon>
        <taxon>Mycobacteriaceae</taxon>
        <taxon>Mycobacterium</taxon>
        <taxon>Mycobacterium tuberculosis complex</taxon>
    </lineage>
</organism>